<sequence length="44" mass="4681">MGNPKKNSKDFAPNHIGTQSKKAGGNKGKQMQDQTGKQPIVDNG</sequence>
<feature type="chain" id="PRO_0000221466" description="Small, acid-soluble spore protein N">
    <location>
        <begin position="1"/>
        <end position="44"/>
    </location>
</feature>
<feature type="region of interest" description="Disordered" evidence="2">
    <location>
        <begin position="1"/>
        <end position="44"/>
    </location>
</feature>
<gene>
    <name evidence="1" type="primary">sspN</name>
    <name type="ordered locus">BA_3670</name>
    <name type="ordered locus">GBAA_3670</name>
    <name type="ordered locus">BAS3403.1</name>
</gene>
<organism>
    <name type="scientific">Bacillus anthracis</name>
    <dbReference type="NCBI Taxonomy" id="1392"/>
    <lineage>
        <taxon>Bacteria</taxon>
        <taxon>Bacillati</taxon>
        <taxon>Bacillota</taxon>
        <taxon>Bacilli</taxon>
        <taxon>Bacillales</taxon>
        <taxon>Bacillaceae</taxon>
        <taxon>Bacillus</taxon>
        <taxon>Bacillus cereus group</taxon>
    </lineage>
</organism>
<comment type="subcellular location">
    <subcellularLocation>
        <location evidence="1">Spore core</location>
    </subcellularLocation>
</comment>
<comment type="induction">
    <text evidence="1">Expressed only in the forespore compartment of sporulating cells.</text>
</comment>
<comment type="similarity">
    <text evidence="1">Belongs to the SspN family.</text>
</comment>
<dbReference type="EMBL" id="AE016879">
    <property type="protein sequence ID" value="AAP27419.1"/>
    <property type="molecule type" value="Genomic_DNA"/>
</dbReference>
<dbReference type="EMBL" id="AE017334">
    <property type="protein sequence ID" value="AAT32779.1"/>
    <property type="molecule type" value="Genomic_DNA"/>
</dbReference>
<dbReference type="EMBL" id="AE017225">
    <property type="status" value="NOT_ANNOTATED_CDS"/>
    <property type="molecule type" value="Genomic_DNA"/>
</dbReference>
<dbReference type="RefSeq" id="NP_845933.1">
    <property type="nucleotide sequence ID" value="NC_003997.3"/>
</dbReference>
<dbReference type="RefSeq" id="WP_000527987.1">
    <property type="nucleotide sequence ID" value="NZ_WXXJ01000029.1"/>
</dbReference>
<dbReference type="STRING" id="261594.GBAA_3670"/>
<dbReference type="DNASU" id="1089238"/>
<dbReference type="GeneID" id="93007574"/>
<dbReference type="KEGG" id="ban:BA_3670"/>
<dbReference type="KEGG" id="bar:GBAA_3670"/>
<dbReference type="PATRIC" id="fig|198094.11.peg.3641"/>
<dbReference type="HOGENOM" id="CLU_216714_0_0_9"/>
<dbReference type="OrthoDB" id="2455637at2"/>
<dbReference type="Proteomes" id="UP000000427">
    <property type="component" value="Chromosome"/>
</dbReference>
<dbReference type="Proteomes" id="UP000000594">
    <property type="component" value="Chromosome"/>
</dbReference>
<dbReference type="GO" id="GO:0042601">
    <property type="term" value="C:endospore-forming forespore"/>
    <property type="evidence" value="ECO:0007669"/>
    <property type="project" value="InterPro"/>
</dbReference>
<dbReference type="GO" id="GO:0030436">
    <property type="term" value="P:asexual sporulation"/>
    <property type="evidence" value="ECO:0007669"/>
    <property type="project" value="UniProtKB-UniRule"/>
</dbReference>
<dbReference type="GO" id="GO:0030435">
    <property type="term" value="P:sporulation resulting in formation of a cellular spore"/>
    <property type="evidence" value="ECO:0007669"/>
    <property type="project" value="UniProtKB-KW"/>
</dbReference>
<dbReference type="HAMAP" id="MF_01505">
    <property type="entry name" value="SspN"/>
    <property type="match status" value="1"/>
</dbReference>
<dbReference type="InterPro" id="IPR012612">
    <property type="entry name" value="SASP_SspN"/>
</dbReference>
<dbReference type="NCBIfam" id="NF006904">
    <property type="entry name" value="PRK09398.1"/>
    <property type="match status" value="1"/>
</dbReference>
<dbReference type="Pfam" id="PF08177">
    <property type="entry name" value="SspN"/>
    <property type="match status" value="1"/>
</dbReference>
<proteinExistence type="inferred from homology"/>
<name>SSPN_BACAN</name>
<accession>Q81Y87</accession>
<accession>Q6KPQ0</accession>
<evidence type="ECO:0000255" key="1">
    <source>
        <dbReference type="HAMAP-Rule" id="MF_01505"/>
    </source>
</evidence>
<evidence type="ECO:0000256" key="2">
    <source>
        <dbReference type="SAM" id="MobiDB-lite"/>
    </source>
</evidence>
<protein>
    <recommendedName>
        <fullName evidence="1">Small, acid-soluble spore protein N</fullName>
        <shortName evidence="1">SASP N</shortName>
    </recommendedName>
</protein>
<keyword id="KW-1185">Reference proteome</keyword>
<keyword id="KW-0749">Sporulation</keyword>
<reference key="1">
    <citation type="journal article" date="2003" name="Nature">
        <title>The genome sequence of Bacillus anthracis Ames and comparison to closely related bacteria.</title>
        <authorList>
            <person name="Read T.D."/>
            <person name="Peterson S.N."/>
            <person name="Tourasse N.J."/>
            <person name="Baillie L.W."/>
            <person name="Paulsen I.T."/>
            <person name="Nelson K.E."/>
            <person name="Tettelin H."/>
            <person name="Fouts D.E."/>
            <person name="Eisen J.A."/>
            <person name="Gill S.R."/>
            <person name="Holtzapple E.K."/>
            <person name="Okstad O.A."/>
            <person name="Helgason E."/>
            <person name="Rilstone J."/>
            <person name="Wu M."/>
            <person name="Kolonay J.F."/>
            <person name="Beanan M.J."/>
            <person name="Dodson R.J."/>
            <person name="Brinkac L.M."/>
            <person name="Gwinn M.L."/>
            <person name="DeBoy R.T."/>
            <person name="Madpu R."/>
            <person name="Daugherty S.C."/>
            <person name="Durkin A.S."/>
            <person name="Haft D.H."/>
            <person name="Nelson W.C."/>
            <person name="Peterson J.D."/>
            <person name="Pop M."/>
            <person name="Khouri H.M."/>
            <person name="Radune D."/>
            <person name="Benton J.L."/>
            <person name="Mahamoud Y."/>
            <person name="Jiang L."/>
            <person name="Hance I.R."/>
            <person name="Weidman J.F."/>
            <person name="Berry K.J."/>
            <person name="Plaut R.D."/>
            <person name="Wolf A.M."/>
            <person name="Watkins K.L."/>
            <person name="Nierman W.C."/>
            <person name="Hazen A."/>
            <person name="Cline R.T."/>
            <person name="Redmond C."/>
            <person name="Thwaite J.E."/>
            <person name="White O."/>
            <person name="Salzberg S.L."/>
            <person name="Thomason B."/>
            <person name="Friedlander A.M."/>
            <person name="Koehler T.M."/>
            <person name="Hanna P.C."/>
            <person name="Kolstoe A.-B."/>
            <person name="Fraser C.M."/>
        </authorList>
    </citation>
    <scope>NUCLEOTIDE SEQUENCE [LARGE SCALE GENOMIC DNA]</scope>
    <source>
        <strain>Ames / isolate Porton</strain>
    </source>
</reference>
<reference key="2">
    <citation type="journal article" date="2009" name="J. Bacteriol.">
        <title>The complete genome sequence of Bacillus anthracis Ames 'Ancestor'.</title>
        <authorList>
            <person name="Ravel J."/>
            <person name="Jiang L."/>
            <person name="Stanley S.T."/>
            <person name="Wilson M.R."/>
            <person name="Decker R.S."/>
            <person name="Read T.D."/>
            <person name="Worsham P."/>
            <person name="Keim P.S."/>
            <person name="Salzberg S.L."/>
            <person name="Fraser-Liggett C.M."/>
            <person name="Rasko D.A."/>
        </authorList>
    </citation>
    <scope>NUCLEOTIDE SEQUENCE [LARGE SCALE GENOMIC DNA]</scope>
    <source>
        <strain>Ames ancestor</strain>
    </source>
</reference>
<reference key="3">
    <citation type="submission" date="2004-01" db="EMBL/GenBank/DDBJ databases">
        <title>Complete genome sequence of Bacillus anthracis Sterne.</title>
        <authorList>
            <person name="Brettin T.S."/>
            <person name="Bruce D."/>
            <person name="Challacombe J.F."/>
            <person name="Gilna P."/>
            <person name="Han C."/>
            <person name="Hill K."/>
            <person name="Hitchcock P."/>
            <person name="Jackson P."/>
            <person name="Keim P."/>
            <person name="Longmire J."/>
            <person name="Lucas S."/>
            <person name="Okinaka R."/>
            <person name="Richardson P."/>
            <person name="Rubin E."/>
            <person name="Tice H."/>
        </authorList>
    </citation>
    <scope>NUCLEOTIDE SEQUENCE [LARGE SCALE GENOMIC DNA]</scope>
    <source>
        <strain>Sterne</strain>
    </source>
</reference>